<comment type="function">
    <text evidence="1">Inhibits post-transcriptional processing of cellular pre-mRNA, by binding and inhibiting two cellular proteins that are required for the 3'-end processing of cellular pre-mRNAs: the 30 kDa cleavage and polyadenylation specificity factor/CPSF4 and the poly(A)-binding protein 2/PABPN1. In turn, unprocessed 3' end pre-mRNAs accumulate in the host nucleus and are no longer exported to the cytoplasm. Cellular protein synthesis is thereby shut off very early after virus infection. Viral protein synthesis is not affected by the inhibition of the cellular 3' end processing machinery because the poly(A) tails of viral mRNAs are produced by the viral polymerase through a stuttering mechanism. Prevents the establishment of the cellular antiviral state by inhibiting TRIM25-mediated RIGI ubiquitination, which normally triggers the antiviral transduction signal that leads to the activation of type I IFN genes by transcription factors IRF3 and IRF7. Also binds poly(A) and U6 snRNA. Inhibits the integrated stress response (ISR) in the infected cell by blocking dsRNA binding by EIF2AK2/PKR and further phosphorylation of EIF2S1/EIF-2ALPHA. Stress granule formation is thus inhibited, which allows protein synthesis and viral replication.</text>
</comment>
<comment type="subunit">
    <text evidence="1">Homodimer. Interacts with host TRIM25 (via coiled coil); this interaction specifically inhibits TRIM25 multimerization and TRIM25-mediated RIGI CARD ubiquitination. Interacts with human EIF2AK2/PKR, CPSF4, IVNS1ABP and PABPN1.</text>
</comment>
<comment type="subcellular location">
    <subcellularLocation>
        <location evidence="1">Host nucleus</location>
    </subcellularLocation>
    <subcellularLocation>
        <location evidence="1">Host cytoplasm</location>
    </subcellularLocation>
    <text evidence="1">In uninfected, transfected cells, NS1 is localized in the nucleus. Only in virus infected cells, the nuclear export signal is unveiled, presumably by a viral protein, and a fraction of NS1 is exported in the cytoplasm.</text>
</comment>
<comment type="alternative products">
    <event type="alternative splicing"/>
    <isoform>
        <id>O41649-1</id>
        <name>NS1</name>
        <sequence type="displayed"/>
    </isoform>
    <isoform>
        <id>O41650-1</id>
        <name>NEP</name>
        <name>NS2</name>
        <sequence type="external"/>
    </isoform>
</comment>
<comment type="domain">
    <text evidence="1">The dsRNA-binding region is required for suppression of RNA silencing.</text>
</comment>
<comment type="PTM">
    <text evidence="1">Upon interferon induction, ISGylated via host HERC5; this results in the impairment of NS1 interaction with RNA targets due to its inability to form homodimers and to interact with host EIF2AK2/PKR.</text>
</comment>
<comment type="similarity">
    <text evidence="1">Belongs to the influenza A viruses NS1 family.</text>
</comment>
<keyword id="KW-0025">Alternative splicing</keyword>
<keyword id="KW-1262">Eukaryotic host gene expression shutoff by virus</keyword>
<keyword id="KW-1035">Host cytoplasm</keyword>
<keyword id="KW-1190">Host gene expression shutoff by virus</keyword>
<keyword id="KW-1192">Host mRNA suppression by virus</keyword>
<keyword id="KW-1048">Host nucleus</keyword>
<keyword id="KW-0945">Host-virus interaction</keyword>
<keyword id="KW-1090">Inhibition of host innate immune response by virus</keyword>
<keyword id="KW-1114">Inhibition of host interferon signaling pathway by virus</keyword>
<keyword id="KW-1102">Inhibition of host PKR by virus</keyword>
<keyword id="KW-1103">Inhibition of host pre-mRNA processing by virus</keyword>
<keyword id="KW-1088">Inhibition of host RIG-I by virus</keyword>
<keyword id="KW-1113">Inhibition of host RLR pathway by virus</keyword>
<keyword id="KW-0922">Interferon antiviral system evasion</keyword>
<keyword id="KW-0694">RNA-binding</keyword>
<keyword id="KW-0832">Ubl conjugation</keyword>
<keyword id="KW-0899">Viral immunoevasion</keyword>
<proteinExistence type="inferred from homology"/>
<dbReference type="EMBL" id="U85377">
    <property type="protein sequence ID" value="AAC40655.1"/>
    <property type="molecule type" value="Genomic_RNA"/>
</dbReference>
<dbReference type="SMR" id="O41649"/>
<dbReference type="GO" id="GO:0030430">
    <property type="term" value="C:host cell cytoplasm"/>
    <property type="evidence" value="ECO:0007669"/>
    <property type="project" value="UniProtKB-SubCell"/>
</dbReference>
<dbReference type="GO" id="GO:0042025">
    <property type="term" value="C:host cell nucleus"/>
    <property type="evidence" value="ECO:0007669"/>
    <property type="project" value="UniProtKB-SubCell"/>
</dbReference>
<dbReference type="GO" id="GO:0030291">
    <property type="term" value="F:protein serine/threonine kinase inhibitor activity"/>
    <property type="evidence" value="ECO:0007669"/>
    <property type="project" value="UniProtKB-KW"/>
</dbReference>
<dbReference type="GO" id="GO:0003723">
    <property type="term" value="F:RNA binding"/>
    <property type="evidence" value="ECO:0007669"/>
    <property type="project" value="UniProtKB-KW"/>
</dbReference>
<dbReference type="GO" id="GO:0039540">
    <property type="term" value="P:symbiont-mediated suppression of host cytoplasmic pattern recognition receptor signaling pathway via inhibition of RIG-I activity"/>
    <property type="evidence" value="ECO:0007669"/>
    <property type="project" value="UniProtKB-KW"/>
</dbReference>
<dbReference type="GO" id="GO:0039657">
    <property type="term" value="P:symbiont-mediated suppression of host gene expression"/>
    <property type="evidence" value="ECO:0007669"/>
    <property type="project" value="UniProtKB-KW"/>
</dbReference>
<dbReference type="GO" id="GO:0039524">
    <property type="term" value="P:symbiont-mediated suppression of host mRNA processing"/>
    <property type="evidence" value="ECO:0007669"/>
    <property type="project" value="UniProtKB-KW"/>
</dbReference>
<dbReference type="GO" id="GO:0039580">
    <property type="term" value="P:symbiont-mediated suppression of host PKR/eIFalpha signaling"/>
    <property type="evidence" value="ECO:0007669"/>
    <property type="project" value="UniProtKB-KW"/>
</dbReference>
<dbReference type="GO" id="GO:0039502">
    <property type="term" value="P:symbiont-mediated suppression of host type I interferon-mediated signaling pathway"/>
    <property type="evidence" value="ECO:0007669"/>
    <property type="project" value="UniProtKB-KW"/>
</dbReference>
<dbReference type="FunFam" id="1.10.287.10:FF:000001">
    <property type="entry name" value="Non-structural protein 1"/>
    <property type="match status" value="1"/>
</dbReference>
<dbReference type="FunFam" id="3.30.420.330:FF:000001">
    <property type="entry name" value="Non-structural protein 1"/>
    <property type="match status" value="1"/>
</dbReference>
<dbReference type="Gene3D" id="3.30.420.330">
    <property type="entry name" value="Influenza virus non-structural protein, effector domain"/>
    <property type="match status" value="1"/>
</dbReference>
<dbReference type="Gene3D" id="1.10.287.10">
    <property type="entry name" value="S15/NS1, RNA-binding"/>
    <property type="match status" value="1"/>
</dbReference>
<dbReference type="HAMAP" id="MF_04066">
    <property type="entry name" value="INFV_NS1"/>
    <property type="match status" value="1"/>
</dbReference>
<dbReference type="InterPro" id="IPR004208">
    <property type="entry name" value="NS1"/>
</dbReference>
<dbReference type="InterPro" id="IPR000256">
    <property type="entry name" value="NS1A"/>
</dbReference>
<dbReference type="InterPro" id="IPR038064">
    <property type="entry name" value="NS1A_effect_dom-like_sf"/>
</dbReference>
<dbReference type="InterPro" id="IPR009068">
    <property type="entry name" value="uS15_NS1_RNA-bd_sf"/>
</dbReference>
<dbReference type="Pfam" id="PF00600">
    <property type="entry name" value="Flu_NS1"/>
    <property type="match status" value="1"/>
</dbReference>
<dbReference type="SUPFAM" id="SSF143021">
    <property type="entry name" value="Ns1 effector domain-like"/>
    <property type="match status" value="1"/>
</dbReference>
<dbReference type="SUPFAM" id="SSF47060">
    <property type="entry name" value="S15/NS1 RNA-binding domain"/>
    <property type="match status" value="1"/>
</dbReference>
<evidence type="ECO:0000255" key="1">
    <source>
        <dbReference type="HAMAP-Rule" id="MF_04066"/>
    </source>
</evidence>
<evidence type="ECO:0000256" key="2">
    <source>
        <dbReference type="SAM" id="MobiDB-lite"/>
    </source>
</evidence>
<gene>
    <name evidence="1" type="primary">NS</name>
</gene>
<organismHost>
    <name type="scientific">Aves</name>
    <dbReference type="NCBI Taxonomy" id="8782"/>
</organismHost>
<protein>
    <recommendedName>
        <fullName evidence="1">Non-structural protein 1</fullName>
        <shortName evidence="1">NS1</shortName>
    </recommendedName>
    <alternativeName>
        <fullName evidence="1">NS1A</fullName>
    </alternativeName>
</protein>
<name>NS1_I87A1</name>
<accession>O41649</accession>
<reference key="1">
    <citation type="journal article" date="1997" name="Virus Res.">
        <title>Evolution of H5 subtype avian influenza A viruses in North America.</title>
        <authorList>
            <person name="Garcia M."/>
            <person name="Suarez D.L."/>
            <person name="Crawford J.M."/>
            <person name="Latimer J.W."/>
            <person name="Slemons R.D."/>
            <person name="Swayne D.E."/>
            <person name="Purdue M.L."/>
        </authorList>
    </citation>
    <scope>NUCLEOTIDE SEQUENCE [GENOMIC RNA]</scope>
</reference>
<sequence>MDSNTVSSFQVDCFLWHVRKRFADQELGDAPFLDRLRRDQKSLRGRGSTLGLDIETATRAGKQIMERILEEESDEALKMTIASVPASRYLTDMTLEEMSRDWFMLMPKQKVAGSLCIRIDQAIMDKNIILKANFSVIFDRLETLILLRAFTEEGAIVGEISPLPSLPGHTDEDVKNAIGVLIGGLEWNDNTVRVSETLQRFAWRSSNEDGRPPLPPKQKRKMARTIESEV</sequence>
<feature type="chain" id="PRO_0000260830" description="Non-structural protein 1">
    <location>
        <begin position="1"/>
        <end position="230"/>
    </location>
</feature>
<feature type="region of interest" description="RNA-binding and homodimerization" evidence="1">
    <location>
        <begin position="1"/>
        <end position="73"/>
    </location>
</feature>
<feature type="region of interest" description="CPSF4-binding" evidence="1">
    <location>
        <begin position="180"/>
        <end position="215"/>
    </location>
</feature>
<feature type="region of interest" description="Disordered" evidence="2">
    <location>
        <begin position="205"/>
        <end position="230"/>
    </location>
</feature>
<feature type="region of interest" description="PABPN1-binding" evidence="1">
    <location>
        <begin position="223"/>
        <end position="230"/>
    </location>
</feature>
<feature type="short sequence motif" description="Nuclear localization signal" evidence="1">
    <location>
        <begin position="34"/>
        <end position="38"/>
    </location>
</feature>
<feature type="short sequence motif" description="Nuclear export signal" evidence="1">
    <location>
        <begin position="137"/>
        <end position="146"/>
    </location>
</feature>
<organism>
    <name type="scientific">Influenza A virus (strain A/Mallard/Ohio/556/1987 H5N9)</name>
    <dbReference type="NCBI Taxonomy" id="293055"/>
    <lineage>
        <taxon>Viruses</taxon>
        <taxon>Riboviria</taxon>
        <taxon>Orthornavirae</taxon>
        <taxon>Negarnaviricota</taxon>
        <taxon>Polyploviricotina</taxon>
        <taxon>Insthoviricetes</taxon>
        <taxon>Articulavirales</taxon>
        <taxon>Orthomyxoviridae</taxon>
        <taxon>Alphainfluenzavirus</taxon>
        <taxon>Alphainfluenzavirus influenzae</taxon>
        <taxon>Influenza A virus</taxon>
    </lineage>
</organism>